<reference key="1">
    <citation type="submission" date="2002-02" db="EMBL/GenBank/DDBJ databases">
        <title>Characterization of the Sec operon of the typhus group Rickettsia.</title>
        <authorList>
            <person name="On'gele E.A."/>
            <person name="Radulovic S."/>
            <person name="Azad A.F."/>
        </authorList>
    </citation>
    <scope>NUCLEOTIDE SEQUENCE [GENOMIC DNA]</scope>
</reference>
<reference key="2">
    <citation type="journal article" date="2004" name="J. Bacteriol.">
        <title>Complete genome sequence of Rickettsia typhi and comparison with sequences of other Rickettsiae.</title>
        <authorList>
            <person name="McLeod M.P."/>
            <person name="Qin X."/>
            <person name="Karpathy S.E."/>
            <person name="Gioia J."/>
            <person name="Highlander S.K."/>
            <person name="Fox G.E."/>
            <person name="McNeill T.Z."/>
            <person name="Jiang H."/>
            <person name="Muzny D."/>
            <person name="Jacob L.S."/>
            <person name="Hawes A.C."/>
            <person name="Sodergren E."/>
            <person name="Gill R."/>
            <person name="Hume J."/>
            <person name="Morgan M."/>
            <person name="Fan G."/>
            <person name="Amin A.G."/>
            <person name="Gibbs R.A."/>
            <person name="Hong C."/>
            <person name="Yu X.-J."/>
            <person name="Walker D.H."/>
            <person name="Weinstock G.M."/>
        </authorList>
    </citation>
    <scope>NUCLEOTIDE SEQUENCE [LARGE SCALE GENOMIC DNA]</scope>
    <source>
        <strain>ATCC VR-144 / Wilmington</strain>
    </source>
</reference>
<reference key="3">
    <citation type="journal article" date="2002" name="Mol. Biol. Evol.">
        <title>Proliferation and deterioration of Rickettsia palindromic elements.</title>
        <authorList>
            <person name="Amiri H."/>
            <person name="Alsmark C.M."/>
            <person name="Andersson S.G.E."/>
        </authorList>
    </citation>
    <scope>NUCLEOTIDE SEQUENCE [GENOMIC DNA] OF 1-37</scope>
</reference>
<comment type="function">
    <text evidence="1">Essential subunit of the Sec protein translocation channel SecYEG. Clamps together the 2 halves of SecY. May contact the channel plug during translocation.</text>
</comment>
<comment type="subunit">
    <text evidence="1">Component of the Sec protein translocase complex. Heterotrimer consisting of SecY, SecE and SecG subunits. The heterotrimers can form oligomers, although 1 heterotrimer is thought to be able to translocate proteins. Interacts with the ribosome. Interacts with SecDF, and other proteins may be involved. Interacts with SecA.</text>
</comment>
<comment type="subcellular location">
    <subcellularLocation>
        <location evidence="1">Cell inner membrane</location>
        <topology evidence="1">Single-pass membrane protein</topology>
    </subcellularLocation>
</comment>
<comment type="similarity">
    <text evidence="1">Belongs to the SecE/SEC61-gamma family.</text>
</comment>
<dbReference type="EMBL" id="AY078353">
    <property type="protein sequence ID" value="AAL82791.1"/>
    <property type="molecule type" value="Genomic_DNA"/>
</dbReference>
<dbReference type="EMBL" id="AE017197">
    <property type="protein sequence ID" value="AAU03608.1"/>
    <property type="molecule type" value="Genomic_DNA"/>
</dbReference>
<dbReference type="EMBL" id="AF502176">
    <property type="protein sequence ID" value="AAM90926.1"/>
    <property type="molecule type" value="Genomic_DNA"/>
</dbReference>
<dbReference type="RefSeq" id="WP_011190595.1">
    <property type="nucleotide sequence ID" value="NC_006142.1"/>
</dbReference>
<dbReference type="SMR" id="Q68XN4"/>
<dbReference type="KEGG" id="rty:RT0123"/>
<dbReference type="eggNOG" id="COG0690">
    <property type="taxonomic scope" value="Bacteria"/>
</dbReference>
<dbReference type="HOGENOM" id="CLU_113663_4_2_5"/>
<dbReference type="OrthoDB" id="9812738at2"/>
<dbReference type="Proteomes" id="UP000000604">
    <property type="component" value="Chromosome"/>
</dbReference>
<dbReference type="GO" id="GO:0005886">
    <property type="term" value="C:plasma membrane"/>
    <property type="evidence" value="ECO:0007669"/>
    <property type="project" value="UniProtKB-SubCell"/>
</dbReference>
<dbReference type="GO" id="GO:0008320">
    <property type="term" value="F:protein transmembrane transporter activity"/>
    <property type="evidence" value="ECO:0007669"/>
    <property type="project" value="UniProtKB-UniRule"/>
</dbReference>
<dbReference type="GO" id="GO:0065002">
    <property type="term" value="P:intracellular protein transmembrane transport"/>
    <property type="evidence" value="ECO:0007669"/>
    <property type="project" value="UniProtKB-UniRule"/>
</dbReference>
<dbReference type="GO" id="GO:0009306">
    <property type="term" value="P:protein secretion"/>
    <property type="evidence" value="ECO:0007669"/>
    <property type="project" value="UniProtKB-UniRule"/>
</dbReference>
<dbReference type="GO" id="GO:0006605">
    <property type="term" value="P:protein targeting"/>
    <property type="evidence" value="ECO:0007669"/>
    <property type="project" value="UniProtKB-UniRule"/>
</dbReference>
<dbReference type="GO" id="GO:0043952">
    <property type="term" value="P:protein transport by the Sec complex"/>
    <property type="evidence" value="ECO:0007669"/>
    <property type="project" value="UniProtKB-UniRule"/>
</dbReference>
<dbReference type="Gene3D" id="1.20.5.1030">
    <property type="entry name" value="Preprotein translocase secy subunit"/>
    <property type="match status" value="1"/>
</dbReference>
<dbReference type="HAMAP" id="MF_00422">
    <property type="entry name" value="SecE"/>
    <property type="match status" value="1"/>
</dbReference>
<dbReference type="InterPro" id="IPR005807">
    <property type="entry name" value="SecE_bac"/>
</dbReference>
<dbReference type="InterPro" id="IPR038379">
    <property type="entry name" value="SecE_sf"/>
</dbReference>
<dbReference type="InterPro" id="IPR001901">
    <property type="entry name" value="Translocase_SecE/Sec61-g"/>
</dbReference>
<dbReference type="NCBIfam" id="TIGR00964">
    <property type="entry name" value="secE_bact"/>
    <property type="match status" value="1"/>
</dbReference>
<dbReference type="PANTHER" id="PTHR33910">
    <property type="entry name" value="PROTEIN TRANSLOCASE SUBUNIT SECE"/>
    <property type="match status" value="1"/>
</dbReference>
<dbReference type="PANTHER" id="PTHR33910:SF1">
    <property type="entry name" value="PROTEIN TRANSLOCASE SUBUNIT SECE"/>
    <property type="match status" value="1"/>
</dbReference>
<dbReference type="Pfam" id="PF00584">
    <property type="entry name" value="SecE"/>
    <property type="match status" value="1"/>
</dbReference>
<dbReference type="PROSITE" id="PS01067">
    <property type="entry name" value="SECE_SEC61G"/>
    <property type="match status" value="1"/>
</dbReference>
<evidence type="ECO:0000255" key="1">
    <source>
        <dbReference type="HAMAP-Rule" id="MF_00422"/>
    </source>
</evidence>
<evidence type="ECO:0000305" key="2"/>
<accession>Q68XN4</accession>
<accession>Q8KTB1</accession>
<accession>Q8RLP4</accession>
<sequence>MFREYKMYKFFEQVKQETYKVFWPNRKELIASTLVVVAAVFIFSLICLVLDYSIHNIMQLLLTIGK</sequence>
<name>SECE_RICTY</name>
<protein>
    <recommendedName>
        <fullName evidence="1">Protein translocase subunit SecE</fullName>
    </recommendedName>
</protein>
<feature type="chain" id="PRO_0000273134" description="Protein translocase subunit SecE">
    <location>
        <begin position="1"/>
        <end position="66"/>
    </location>
</feature>
<feature type="transmembrane region" description="Helical" evidence="1">
    <location>
        <begin position="29"/>
        <end position="49"/>
    </location>
</feature>
<feature type="sequence conflict" description="In Ref. 1; AAL82791 and 3; AAM90926." evidence="2" ref="1 3">
    <original>M</original>
    <variation>I</variation>
    <location>
        <position position="7"/>
    </location>
</feature>
<proteinExistence type="inferred from homology"/>
<keyword id="KW-0997">Cell inner membrane</keyword>
<keyword id="KW-1003">Cell membrane</keyword>
<keyword id="KW-0472">Membrane</keyword>
<keyword id="KW-0653">Protein transport</keyword>
<keyword id="KW-0811">Translocation</keyword>
<keyword id="KW-0812">Transmembrane</keyword>
<keyword id="KW-1133">Transmembrane helix</keyword>
<keyword id="KW-0813">Transport</keyword>
<gene>
    <name evidence="1" type="primary">secE</name>
    <name type="ordered locus">RT0123</name>
</gene>
<organism>
    <name type="scientific">Rickettsia typhi (strain ATCC VR-144 / Wilmington)</name>
    <dbReference type="NCBI Taxonomy" id="257363"/>
    <lineage>
        <taxon>Bacteria</taxon>
        <taxon>Pseudomonadati</taxon>
        <taxon>Pseudomonadota</taxon>
        <taxon>Alphaproteobacteria</taxon>
        <taxon>Rickettsiales</taxon>
        <taxon>Rickettsiaceae</taxon>
        <taxon>Rickettsieae</taxon>
        <taxon>Rickettsia</taxon>
        <taxon>typhus group</taxon>
    </lineage>
</organism>